<comment type="function">
    <text evidence="4 5">Oxidizes the CoA-esters of 2-methyl-branched fatty acids.</text>
</comment>
<comment type="catalytic activity">
    <reaction evidence="4">
        <text>a 2,3-saturated acyl-CoA + O2 = a (2E)-enoyl-CoA + H2O2</text>
        <dbReference type="Rhea" id="RHEA:38959"/>
        <dbReference type="ChEBI" id="CHEBI:15379"/>
        <dbReference type="ChEBI" id="CHEBI:16240"/>
        <dbReference type="ChEBI" id="CHEBI:58856"/>
        <dbReference type="ChEBI" id="CHEBI:65111"/>
        <dbReference type="EC" id="1.3.3.6"/>
    </reaction>
    <physiologicalReaction direction="left-to-right" evidence="8">
        <dbReference type="Rhea" id="RHEA:38960"/>
    </physiologicalReaction>
</comment>
<comment type="catalytic activity">
    <reaction evidence="4">
        <text>(2S)-pristanoyl-CoA + O2 = (2E)-pristenoyl-CoA + H2O2</text>
        <dbReference type="Rhea" id="RHEA:40459"/>
        <dbReference type="ChEBI" id="CHEBI:15379"/>
        <dbReference type="ChEBI" id="CHEBI:16240"/>
        <dbReference type="ChEBI" id="CHEBI:77099"/>
        <dbReference type="ChEBI" id="CHEBI:77293"/>
    </reaction>
    <physiologicalReaction direction="left-to-right" evidence="8">
        <dbReference type="Rhea" id="RHEA:40460"/>
    </physiologicalReaction>
</comment>
<comment type="catalytic activity">
    <reaction evidence="4">
        <text>tetracosanoyl-CoA + O2 = (2E)-tetracosenoyl-CoA + H2O2</text>
        <dbReference type="Rhea" id="RHEA:40319"/>
        <dbReference type="ChEBI" id="CHEBI:15379"/>
        <dbReference type="ChEBI" id="CHEBI:16240"/>
        <dbReference type="ChEBI" id="CHEBI:65052"/>
        <dbReference type="ChEBI" id="CHEBI:74693"/>
    </reaction>
    <physiologicalReaction direction="left-to-right" evidence="8">
        <dbReference type="Rhea" id="RHEA:40320"/>
    </physiologicalReaction>
</comment>
<comment type="catalytic activity">
    <reaction evidence="4">
        <text>hexadecanoyl-CoA + O2 = (2E)-hexadecenoyl-CoA + H2O2</text>
        <dbReference type="Rhea" id="RHEA:40167"/>
        <dbReference type="ChEBI" id="CHEBI:15379"/>
        <dbReference type="ChEBI" id="CHEBI:16240"/>
        <dbReference type="ChEBI" id="CHEBI:57379"/>
        <dbReference type="ChEBI" id="CHEBI:61526"/>
    </reaction>
    <physiologicalReaction direction="left-to-right" evidence="8">
        <dbReference type="Rhea" id="RHEA:40168"/>
    </physiologicalReaction>
</comment>
<comment type="catalytic activity">
    <reaction evidence="4">
        <text>hexadecanedioyl-CoA + O2 = (2E)-hexadecenedioyl-CoA + H2O2</text>
        <dbReference type="Rhea" id="RHEA:40275"/>
        <dbReference type="ChEBI" id="CHEBI:15379"/>
        <dbReference type="ChEBI" id="CHEBI:16240"/>
        <dbReference type="ChEBI" id="CHEBI:77075"/>
        <dbReference type="ChEBI" id="CHEBI:77085"/>
    </reaction>
    <physiologicalReaction direction="left-to-right" evidence="8">
        <dbReference type="Rhea" id="RHEA:40276"/>
    </physiologicalReaction>
</comment>
<comment type="cofactor">
    <cofactor evidence="2">
        <name>FAD</name>
        <dbReference type="ChEBI" id="CHEBI:57692"/>
    </cofactor>
</comment>
<comment type="pathway">
    <text>Lipid metabolism; peroxisomal fatty acid beta-oxidation.</text>
</comment>
<comment type="subcellular location">
    <subcellularLocation>
        <location evidence="9">Peroxisome</location>
    </subcellularLocation>
</comment>
<comment type="tissue specificity">
    <text evidence="5">Most abundant in liver, kidney, lung, and testis. Present in all tissues tested.</text>
</comment>
<comment type="similarity">
    <text evidence="7">Belongs to the acyl-CoA oxidase family.</text>
</comment>
<feature type="chain" id="PRO_0000204687" description="Peroxisomal acyl-coenzyme A oxidase 3">
    <location>
        <begin position="1"/>
        <end position="700"/>
    </location>
</feature>
<feature type="short sequence motif" description="Microbody targeting signal" evidence="5">
    <location>
        <begin position="698"/>
        <end position="700"/>
    </location>
</feature>
<feature type="modified residue" description="Phosphoserine" evidence="10">
    <location>
        <position position="10"/>
    </location>
</feature>
<feature type="modified residue" description="Phosphothreonine" evidence="1">
    <location>
        <position position="281"/>
    </location>
</feature>
<feature type="modified residue" description="N6-succinyllysine" evidence="3">
    <location>
        <position position="505"/>
    </location>
</feature>
<reference key="1">
    <citation type="journal article" date="1996" name="Eur. J. Biochem.">
        <title>Rat pristanoyl-CoA oxidase. cDNA cloning and recognition of its C-terminal (SQL) by the peroxisomal-targeting signal 1 receptor.</title>
        <authorList>
            <person name="Vanhooren J.C.T."/>
            <person name="Fransen M."/>
            <person name="de Bethune B."/>
            <person name="Baumgart E."/>
            <person name="Baes M."/>
            <person name="Torrekens S."/>
            <person name="van Leuven F."/>
            <person name="Mannaerts G.P."/>
            <person name="van Veldhoven P.P."/>
        </authorList>
    </citation>
    <scope>NUCLEOTIDE SEQUENCE [MRNA]</scope>
    <scope>PARTIAL PROTEIN SEQUENCE</scope>
    <scope>FUNCTION</scope>
    <scope>TISSUE SPECIFICITY</scope>
    <scope>SUBCELLULAR LOCATION</scope>
    <scope>MICROBODY TARGETING</scope>
    <source>
        <tissue>Liver</tissue>
    </source>
</reference>
<reference key="2">
    <citation type="journal article" date="1992" name="J. Biol. Chem.">
        <title>Substrate specificities of rat liver peroxisomal acyl-CoA oxidases: palmitoyl-CoA oxidase (inducible acyl-CoA oxidase), pristanoyl-CoA oxidase (non-inducible acyl-CoA oxidase), and trihydroxycoprostanoyl-CoA oxidase.</title>
        <authorList>
            <person name="Van Veldhoven P.P."/>
            <person name="Vanhove G."/>
            <person name="Assselberghs S."/>
            <person name="Eyssen H.J."/>
            <person name="Mannaerts G.P."/>
        </authorList>
    </citation>
    <scope>FUNCTION</scope>
    <scope>CATALYTIC ACTIVITY</scope>
</reference>
<reference key="3">
    <citation type="journal article" date="2012" name="Nat. Commun.">
        <title>Quantitative maps of protein phosphorylation sites across 14 different rat organs and tissues.</title>
        <authorList>
            <person name="Lundby A."/>
            <person name="Secher A."/>
            <person name="Lage K."/>
            <person name="Nordsborg N.B."/>
            <person name="Dmytriyev A."/>
            <person name="Lundby C."/>
            <person name="Olsen J.V."/>
        </authorList>
    </citation>
    <scope>PHOSPHORYLATION [LARGE SCALE ANALYSIS] AT SER-10</scope>
    <scope>IDENTIFICATION BY MASS SPECTROMETRY [LARGE SCALE ANALYSIS]</scope>
</reference>
<sequence length="700" mass="78446">MGSSSERRDSVLWSDIPKGPLSAYRARASFNSKELMLFWDGQDVLDFKKTIFSTLENDPLFARPFGADLPLEKERELNFLRCKRVFEYGFFNAEDMLKNPLKILVLMNCLGMYDWSLANKCVLHMLVFGSTIIGSGSEHHFKYLEKIYNLEIFGCFALTELSHGSNTKAMRTTAHYDPATQEFILHSPDFEAAKFWVGNLGKTATHAVVFAQLYTPDGQCRGLHSFLVQIRDPKTLLPMPGVMVGDMGKKLGQNGLDNGFAMFHKVRIPRQNLLDRTGNVTSEGHYHTPFKDVRQRLGASLGSLSSGRISIISISVVNLKLAVIIAIRFSATRRQFGPTDKEEIPVLEYPLQQWRLLPYLAAAYALDHFSKTIFLDLIELQRAGKVGTTVTGRQSSGREIHALASAGKPLASWTAQRGIQECREVVGGHGYLAMNRFGELRNDNDPNCTYEGDNNVLLQQTSNYLLSLLEHPLQDGAHFTSPLKTVNFLEAYPGILGQKFMASSKADWLDSEAPLAAYRWLVCYLLRESHQRYCQEKKSRGSDFEARNNSQVYGCRPLALAFMELTVMQRFHEHTHSSSVPPSLRTVLGRLSMLYGLWCLSQHTALLYRGGYISGEQTGKAMEDAILMLCVQLKDDAVALVDAIAPSDFVLGSPIGRADGELYKNLWAAVLQQSGVLERAAWWPEFTANKSVANRLKSQL</sequence>
<keyword id="KW-0903">Direct protein sequencing</keyword>
<keyword id="KW-0274">FAD</keyword>
<keyword id="KW-0276">Fatty acid metabolism</keyword>
<keyword id="KW-0285">Flavoprotein</keyword>
<keyword id="KW-0443">Lipid metabolism</keyword>
<keyword id="KW-0560">Oxidoreductase</keyword>
<keyword id="KW-0576">Peroxisome</keyword>
<keyword id="KW-0597">Phosphoprotein</keyword>
<keyword id="KW-1185">Reference proteome</keyword>
<protein>
    <recommendedName>
        <fullName>Peroxisomal acyl-coenzyme A oxidase 3</fullName>
        <ecNumber evidence="4">1.3.3.6</ecNumber>
    </recommendedName>
    <alternativeName>
        <fullName>Branched-chain acyl-CoA oxidase</fullName>
        <shortName>BRCACox</shortName>
    </alternativeName>
    <alternativeName>
        <fullName evidence="6">Pristanoyl-CoA oxidase</fullName>
    </alternativeName>
</protein>
<dbReference type="EC" id="1.3.3.6" evidence="4"/>
<dbReference type="EMBL" id="X95188">
    <property type="protein sequence ID" value="CAA64487.1"/>
    <property type="molecule type" value="mRNA"/>
</dbReference>
<dbReference type="RefSeq" id="NP_445791.1">
    <property type="nucleotide sequence ID" value="NM_053339.1"/>
</dbReference>
<dbReference type="SMR" id="Q63448"/>
<dbReference type="FunCoup" id="Q63448">
    <property type="interactions" value="1557"/>
</dbReference>
<dbReference type="IntAct" id="Q63448">
    <property type="interactions" value="1"/>
</dbReference>
<dbReference type="STRING" id="10116.ENSRNOP00000042002"/>
<dbReference type="SwissLipids" id="SLP:000000545"/>
<dbReference type="iPTMnet" id="Q63448"/>
<dbReference type="PhosphoSitePlus" id="Q63448"/>
<dbReference type="jPOST" id="Q63448"/>
<dbReference type="PaxDb" id="10116-ENSRNOP00000042002"/>
<dbReference type="GeneID" id="83522"/>
<dbReference type="KEGG" id="rno:83522"/>
<dbReference type="AGR" id="RGD:69245"/>
<dbReference type="CTD" id="8310"/>
<dbReference type="RGD" id="69245">
    <property type="gene designation" value="Acox3"/>
</dbReference>
<dbReference type="eggNOG" id="KOG0135">
    <property type="taxonomic scope" value="Eukaryota"/>
</dbReference>
<dbReference type="InParanoid" id="Q63448"/>
<dbReference type="PhylomeDB" id="Q63448"/>
<dbReference type="Reactome" id="R-RNO-389887">
    <property type="pathway name" value="Beta-oxidation of pristanoyl-CoA"/>
</dbReference>
<dbReference type="Reactome" id="R-RNO-9033241">
    <property type="pathway name" value="Peroxisomal protein import"/>
</dbReference>
<dbReference type="SABIO-RK" id="Q63448"/>
<dbReference type="UniPathway" id="UPA00661"/>
<dbReference type="PRO" id="PR:Q63448"/>
<dbReference type="Proteomes" id="UP000002494">
    <property type="component" value="Unplaced"/>
</dbReference>
<dbReference type="GO" id="GO:0005777">
    <property type="term" value="C:peroxisome"/>
    <property type="evidence" value="ECO:0000314"/>
    <property type="project" value="HGNC-UCL"/>
</dbReference>
<dbReference type="GO" id="GO:0071949">
    <property type="term" value="F:FAD binding"/>
    <property type="evidence" value="ECO:0007669"/>
    <property type="project" value="InterPro"/>
</dbReference>
<dbReference type="GO" id="GO:0005504">
    <property type="term" value="F:fatty acid binding"/>
    <property type="evidence" value="ECO:0000314"/>
    <property type="project" value="RGD"/>
</dbReference>
<dbReference type="GO" id="GO:0050660">
    <property type="term" value="F:flavin adenine dinucleotide binding"/>
    <property type="evidence" value="ECO:0000314"/>
    <property type="project" value="RGD"/>
</dbReference>
<dbReference type="GO" id="GO:0016402">
    <property type="term" value="F:pristanoyl-CoA oxidase activity"/>
    <property type="evidence" value="ECO:0000314"/>
    <property type="project" value="RGD"/>
</dbReference>
<dbReference type="GO" id="GO:0033540">
    <property type="term" value="P:fatty acid beta-oxidation using acyl-CoA oxidase"/>
    <property type="evidence" value="ECO:0000314"/>
    <property type="project" value="RGD"/>
</dbReference>
<dbReference type="CDD" id="cd01150">
    <property type="entry name" value="AXO"/>
    <property type="match status" value="1"/>
</dbReference>
<dbReference type="FunFam" id="1.20.140.10:FF:000007">
    <property type="entry name" value="Acyl-coenzyme A oxidase"/>
    <property type="match status" value="1"/>
</dbReference>
<dbReference type="FunFam" id="1.20.140.10:FF:000010">
    <property type="entry name" value="Acyl-coenzyme A oxidase"/>
    <property type="match status" value="1"/>
</dbReference>
<dbReference type="FunFam" id="2.40.110.10:FF:000005">
    <property type="entry name" value="Acyl-coenzyme A oxidase"/>
    <property type="match status" value="1"/>
</dbReference>
<dbReference type="Gene3D" id="2.40.110.10">
    <property type="entry name" value="Butyryl-CoA Dehydrogenase, subunit A, domain 2"/>
    <property type="match status" value="1"/>
</dbReference>
<dbReference type="Gene3D" id="1.20.140.10">
    <property type="entry name" value="Butyryl-CoA Dehydrogenase, subunit A, domain 3"/>
    <property type="match status" value="2"/>
</dbReference>
<dbReference type="InterPro" id="IPR034171">
    <property type="entry name" value="ACO"/>
</dbReference>
<dbReference type="InterPro" id="IPR055060">
    <property type="entry name" value="ACOX_C_alpha1"/>
</dbReference>
<dbReference type="InterPro" id="IPR006091">
    <property type="entry name" value="Acyl-CoA_Oxase/DH_mid-dom"/>
</dbReference>
<dbReference type="InterPro" id="IPR046373">
    <property type="entry name" value="Acyl-CoA_Oxase/DH_mid-dom_sf"/>
</dbReference>
<dbReference type="InterPro" id="IPR012258">
    <property type="entry name" value="Acyl-CoA_oxidase"/>
</dbReference>
<dbReference type="InterPro" id="IPR002655">
    <property type="entry name" value="Acyl-CoA_oxidase_C"/>
</dbReference>
<dbReference type="InterPro" id="IPR036250">
    <property type="entry name" value="AcylCo_DH-like_C"/>
</dbReference>
<dbReference type="InterPro" id="IPR009100">
    <property type="entry name" value="AcylCoA_DH/oxidase_NM_dom_sf"/>
</dbReference>
<dbReference type="PANTHER" id="PTHR10909">
    <property type="entry name" value="ELECTRON TRANSPORT OXIDOREDUCTASE"/>
    <property type="match status" value="1"/>
</dbReference>
<dbReference type="PANTHER" id="PTHR10909:SF390">
    <property type="entry name" value="PEROXISOMAL ACYL-COENZYME A OXIDASE 3"/>
    <property type="match status" value="1"/>
</dbReference>
<dbReference type="Pfam" id="PF01756">
    <property type="entry name" value="ACOX"/>
    <property type="match status" value="1"/>
</dbReference>
<dbReference type="Pfam" id="PF22924">
    <property type="entry name" value="ACOX_C_alpha1"/>
    <property type="match status" value="1"/>
</dbReference>
<dbReference type="Pfam" id="PF02770">
    <property type="entry name" value="Acyl-CoA_dh_M"/>
    <property type="match status" value="1"/>
</dbReference>
<dbReference type="PIRSF" id="PIRSF000168">
    <property type="entry name" value="Acyl-CoA_oxidase"/>
    <property type="match status" value="1"/>
</dbReference>
<dbReference type="SUPFAM" id="SSF47203">
    <property type="entry name" value="Acyl-CoA dehydrogenase C-terminal domain-like"/>
    <property type="match status" value="2"/>
</dbReference>
<dbReference type="SUPFAM" id="SSF56645">
    <property type="entry name" value="Acyl-CoA dehydrogenase NM domain-like"/>
    <property type="match status" value="1"/>
</dbReference>
<proteinExistence type="evidence at protein level"/>
<organism>
    <name type="scientific">Rattus norvegicus</name>
    <name type="common">Rat</name>
    <dbReference type="NCBI Taxonomy" id="10116"/>
    <lineage>
        <taxon>Eukaryota</taxon>
        <taxon>Metazoa</taxon>
        <taxon>Chordata</taxon>
        <taxon>Craniata</taxon>
        <taxon>Vertebrata</taxon>
        <taxon>Euteleostomi</taxon>
        <taxon>Mammalia</taxon>
        <taxon>Eutheria</taxon>
        <taxon>Euarchontoglires</taxon>
        <taxon>Glires</taxon>
        <taxon>Rodentia</taxon>
        <taxon>Myomorpha</taxon>
        <taxon>Muroidea</taxon>
        <taxon>Muridae</taxon>
        <taxon>Murinae</taxon>
        <taxon>Rattus</taxon>
    </lineage>
</organism>
<accession>Q63448</accession>
<name>ACOX3_RAT</name>
<evidence type="ECO:0000250" key="1">
    <source>
        <dbReference type="UniProtKB" id="O15254"/>
    </source>
</evidence>
<evidence type="ECO:0000250" key="2">
    <source>
        <dbReference type="UniProtKB" id="P07872"/>
    </source>
</evidence>
<evidence type="ECO:0000250" key="3">
    <source>
        <dbReference type="UniProtKB" id="Q9EPL9"/>
    </source>
</evidence>
<evidence type="ECO:0000269" key="4">
    <source>
    </source>
</evidence>
<evidence type="ECO:0000269" key="5">
    <source>
    </source>
</evidence>
<evidence type="ECO:0000303" key="6">
    <source>
    </source>
</evidence>
<evidence type="ECO:0000305" key="7"/>
<evidence type="ECO:0000305" key="8">
    <source>
    </source>
</evidence>
<evidence type="ECO:0000305" key="9">
    <source>
    </source>
</evidence>
<evidence type="ECO:0007744" key="10">
    <source>
    </source>
</evidence>
<gene>
    <name type="primary">Acox3</name>
    <name type="synonym">Prcox</name>
</gene>